<keyword id="KW-1003">Cell membrane</keyword>
<keyword id="KW-0472">Membrane</keyword>
<keyword id="KW-0812">Transmembrane</keyword>
<keyword id="KW-1133">Transmembrane helix</keyword>
<keyword id="KW-0813">Transport</keyword>
<evidence type="ECO:0000255" key="1"/>
<evidence type="ECO:0000305" key="2"/>
<gene>
    <name type="primary">icaC</name>
</gene>
<organism>
    <name type="scientific">Staphylococcus epidermidis</name>
    <dbReference type="NCBI Taxonomy" id="1282"/>
    <lineage>
        <taxon>Bacteria</taxon>
        <taxon>Bacillati</taxon>
        <taxon>Bacillota</taxon>
        <taxon>Bacilli</taxon>
        <taxon>Bacillales</taxon>
        <taxon>Staphylococcaceae</taxon>
        <taxon>Staphylococcus</taxon>
    </lineage>
</organism>
<feature type="chain" id="PRO_0000208078" description="Probable poly-beta-1,6-N-acetyl-D-glucosamine export protein">
    <location>
        <begin position="1"/>
        <end position="355"/>
    </location>
</feature>
<feature type="transmembrane region" description="Helical" evidence="1">
    <location>
        <begin position="13"/>
        <end position="30"/>
    </location>
</feature>
<feature type="transmembrane region" description="Helical" evidence="1">
    <location>
        <begin position="45"/>
        <end position="67"/>
    </location>
</feature>
<feature type="transmembrane region" description="Helical" evidence="1">
    <location>
        <begin position="74"/>
        <end position="96"/>
    </location>
</feature>
<feature type="transmembrane region" description="Helical" evidence="1">
    <location>
        <begin position="116"/>
        <end position="138"/>
    </location>
</feature>
<feature type="transmembrane region" description="Helical" evidence="1">
    <location>
        <begin position="145"/>
        <end position="167"/>
    </location>
</feature>
<feature type="transmembrane region" description="Helical" evidence="1">
    <location>
        <begin position="187"/>
        <end position="204"/>
    </location>
</feature>
<feature type="transmembrane region" description="Helical" evidence="1">
    <location>
        <begin position="211"/>
        <end position="233"/>
    </location>
</feature>
<feature type="transmembrane region" description="Helical" evidence="1">
    <location>
        <begin position="243"/>
        <end position="262"/>
    </location>
</feature>
<feature type="transmembrane region" description="Helical" evidence="1">
    <location>
        <begin position="269"/>
        <end position="291"/>
    </location>
</feature>
<feature type="transmembrane region" description="Helical" evidence="1">
    <location>
        <begin position="306"/>
        <end position="328"/>
    </location>
</feature>
<proteinExistence type="inferred from homology"/>
<sequence length="355" mass="42090">MKKNKLELVYLRAFICVIIIVTHLLTQITLENEQMSDSSLILQYYIRNIFIFGTPSFIILSQLLTTLNYESVTINYLFSRFKYIFIPYLLIGLFYSYSESLITASSFKKQFIENVVLGQWYGYFIIIIMQFFVLSYIIYKINFRLFNSKILLLLAFIVQQSYLHYFLNNDTFHQFMTHYYPLSENTMILGWIFYFFLGGYIGYNYEKILSFLEKYLIIVIMLTLGAYVLFIAVSGSDYWNVTSFTYTLTLYNSVMFFLLLGVCMHFKTMLLNTIKAISAFSFFIYLLHPIILDSLFAYTNIFEDNTIVFLAISLLMILGICIGVGMMLREFYIFRFVIGKQPYKLQFDQYQPNWN</sequence>
<dbReference type="EMBL" id="AY382582">
    <property type="protein sequence ID" value="AAQ88123.1"/>
    <property type="molecule type" value="Genomic_DNA"/>
</dbReference>
<dbReference type="EMBL" id="AY138959">
    <property type="protein sequence ID" value="AAN17774.1"/>
    <property type="molecule type" value="Genomic_DNA"/>
</dbReference>
<dbReference type="RefSeq" id="WP_002484505.1">
    <property type="nucleotide sequence ID" value="NZ_WLUZ01000001.1"/>
</dbReference>
<dbReference type="OrthoDB" id="65129at2"/>
<dbReference type="GO" id="GO:0005886">
    <property type="term" value="C:plasma membrane"/>
    <property type="evidence" value="ECO:0007669"/>
    <property type="project" value="UniProtKB-SubCell"/>
</dbReference>
<dbReference type="GO" id="GO:0016413">
    <property type="term" value="F:O-acetyltransferase activity"/>
    <property type="evidence" value="ECO:0007669"/>
    <property type="project" value="TreeGrafter"/>
</dbReference>
<dbReference type="GO" id="GO:0009246">
    <property type="term" value="P:enterobacterial common antigen biosynthetic process"/>
    <property type="evidence" value="ECO:0007669"/>
    <property type="project" value="TreeGrafter"/>
</dbReference>
<dbReference type="InterPro" id="IPR002656">
    <property type="entry name" value="Acyl_transf_3_dom"/>
</dbReference>
<dbReference type="PANTHER" id="PTHR40074">
    <property type="entry name" value="O-ACETYLTRANSFERASE WECH"/>
    <property type="match status" value="1"/>
</dbReference>
<dbReference type="PANTHER" id="PTHR40074:SF2">
    <property type="entry name" value="O-ACETYLTRANSFERASE WECH"/>
    <property type="match status" value="1"/>
</dbReference>
<dbReference type="Pfam" id="PF01757">
    <property type="entry name" value="Acyl_transf_3"/>
    <property type="match status" value="1"/>
</dbReference>
<protein>
    <recommendedName>
        <fullName>Probable poly-beta-1,6-N-acetyl-D-glucosamine export protein</fullName>
        <shortName>PGA export protein</shortName>
        <shortName>Poly-beta-1,6-GlcNAc export protein</shortName>
    </recommendedName>
    <alternativeName>
        <fullName>Biofilm polysaccharide intercellular adhesin export protein</fullName>
        <shortName>Biofilm PIA export protein</shortName>
    </alternativeName>
    <alternativeName>
        <fullName>Intercellular adhesion protein C</fullName>
    </alternativeName>
</protein>
<accession>P69518</accession>
<accession>Q54068</accession>
<reference key="1">
    <citation type="submission" date="2003-09" db="EMBL/GenBank/DDBJ databases">
        <authorList>
            <person name="Li H."/>
            <person name="Wen Y."/>
        </authorList>
    </citation>
    <scope>NUCLEOTIDE SEQUENCE [GENOMIC DNA]</scope>
    <source>
        <strain>97-337</strain>
    </source>
</reference>
<reference key="2">
    <citation type="journal article" date="2004" name="J. Med. Microbiol.">
        <title>Genetic and phenotypic analysis of biofilm phenotypic variation in multiple Staphylococcus epidermidis isolates.</title>
        <authorList>
            <person name="Handke L.D."/>
            <person name="Conlon K.M."/>
            <person name="Slater S.R."/>
            <person name="Elbaruni S."/>
            <person name="Fitzpatrick F."/>
            <person name="Humphreys H."/>
            <person name="Giles W.P."/>
            <person name="Rupp M.E."/>
            <person name="Fey P.D."/>
            <person name="O'Gara J.P."/>
        </authorList>
    </citation>
    <scope>NUCLEOTIDE SEQUENCE [GENOMIC DNA]</scope>
    <source>
        <strain>SE5</strain>
    </source>
</reference>
<reference key="3">
    <citation type="journal article" date="2004" name="J. Biol. Chem.">
        <title>A crucial role for exopolysaccharide modification in bacterial biofilm formation, immune evasion, and virulence.</title>
        <authorList>
            <person name="Vuong C."/>
            <person name="Kocianova S."/>
            <person name="Voyich J.M."/>
            <person name="Yao Y."/>
            <person name="Fischer E.R."/>
            <person name="DeLeo F.R."/>
            <person name="Otto M."/>
        </authorList>
    </citation>
    <scope>PROBABLE FUNCTION</scope>
    <source>
        <strain>Clinical isolate 1457</strain>
    </source>
</reference>
<name>ICAC_STAEP</name>
<comment type="function">
    <text>Presumably involved in the export of the biofilm adhesin polysaccharide poly-beta-1,6-N-acetyl-D-glucosamine (PNAG, also referred to as PIA) across the cell membrane.</text>
</comment>
<comment type="subcellular location">
    <subcellularLocation>
        <location evidence="2">Cell membrane</location>
        <topology evidence="2">Multi-pass membrane protein</topology>
    </subcellularLocation>
</comment>
<comment type="similarity">
    <text evidence="2">Belongs to the acyltransferase 3 family.</text>
</comment>